<feature type="peptide" id="PRO_0000394176" description="Caerulein" evidence="2">
    <location>
        <begin position="1"/>
        <end position="10"/>
    </location>
</feature>
<feature type="modified residue" description="Pyrrolidone carboxylic acid" evidence="2">
    <location>
        <position position="1"/>
    </location>
</feature>
<feature type="modified residue" description="Sulfotyrosine" evidence="2">
    <location>
        <position position="4"/>
    </location>
</feature>
<feature type="modified residue" description="Phenylalanine amide" evidence="2">
    <location>
        <position position="10"/>
    </location>
</feature>
<keyword id="KW-0027">Amidation</keyword>
<keyword id="KW-0878">Amphibian defense peptide</keyword>
<keyword id="KW-0903">Direct protein sequencing</keyword>
<keyword id="KW-0873">Pyrrolidone carboxylic acid</keyword>
<keyword id="KW-0964">Secreted</keyword>
<keyword id="KW-0765">Sulfation</keyword>
<evidence type="ECO:0000255" key="1"/>
<evidence type="ECO:0000269" key="2">
    <source>
    </source>
</evidence>
<evidence type="ECO:0000303" key="3">
    <source>
    </source>
</evidence>
<evidence type="ECO:0000305" key="4"/>
<protein>
    <recommendedName>
        <fullName evidence="3">Caerulein</fullName>
    </recommendedName>
</protein>
<accession>P86486</accession>
<dbReference type="GO" id="GO:0005576">
    <property type="term" value="C:extracellular region"/>
    <property type="evidence" value="ECO:0000314"/>
    <property type="project" value="UniProtKB"/>
</dbReference>
<dbReference type="GO" id="GO:0006952">
    <property type="term" value="P:defense response"/>
    <property type="evidence" value="ECO:0007669"/>
    <property type="project" value="UniProtKB-KW"/>
</dbReference>
<dbReference type="GO" id="GO:0045987">
    <property type="term" value="P:positive regulation of smooth muscle contraction"/>
    <property type="evidence" value="ECO:0000314"/>
    <property type="project" value="UniProtKB"/>
</dbReference>
<dbReference type="InterPro" id="IPR013152">
    <property type="entry name" value="Gastrin/cholecystokinin_CS"/>
</dbReference>
<dbReference type="PROSITE" id="PS00259">
    <property type="entry name" value="GASTRIN"/>
    <property type="match status" value="1"/>
</dbReference>
<name>CAER_LITPE</name>
<sequence length="10" mass="1290">QQDYTGWMDF</sequence>
<organism>
    <name type="scientific">Litoria peronii</name>
    <name type="common">Emerald spotted tree frog</name>
    <name type="synonym">Hyla peronii</name>
    <dbReference type="NCBI Taxonomy" id="317363"/>
    <lineage>
        <taxon>Eukaryota</taxon>
        <taxon>Metazoa</taxon>
        <taxon>Chordata</taxon>
        <taxon>Craniata</taxon>
        <taxon>Vertebrata</taxon>
        <taxon>Euteleostomi</taxon>
        <taxon>Amphibia</taxon>
        <taxon>Batrachia</taxon>
        <taxon>Anura</taxon>
        <taxon>Neobatrachia</taxon>
        <taxon>Hyloidea</taxon>
        <taxon>Hylidae</taxon>
        <taxon>Pelodryadinae</taxon>
        <taxon>Litoria</taxon>
    </lineage>
</organism>
<reference evidence="4" key="1">
    <citation type="journal article" date="2009" name="Rapid Commun. Mass Spectrom.">
        <title>The host-defence skin peptide profiles of Peron's Tree Frog Litoria peronii in winter and summer. Sequence determination by electrospray mass spectrometry and activities of the peptides.</title>
        <authorList>
            <person name="Bilusich D."/>
            <person name="Jackway R.J."/>
            <person name="Musgrave I.F."/>
            <person name="Tyler M.J."/>
            <person name="Bowie J.H."/>
        </authorList>
    </citation>
    <scope>PROTEIN SEQUENCE</scope>
    <scope>FUNCTION</scope>
    <scope>SUBCELLULAR LOCATION</scope>
    <scope>TISSUE SPECIFICITY</scope>
    <scope>DEVELOPMENTAL STAGE</scope>
    <scope>MASS SPECTROMETRY</scope>
    <scope>PYROGLUTAMATE FORMATION AT GLN-1</scope>
    <scope>SULFATION AT TYR-4</scope>
    <scope>AMIDATION AT PHE-10</scope>
    <source>
        <tissue evidence="2">Skin secretion</tissue>
    </source>
</reference>
<proteinExistence type="evidence at protein level"/>
<comment type="function">
    <text evidence="2">Induces contraction of intestinal smooth muscle in isolated guinea pig ileum.</text>
</comment>
<comment type="subcellular location">
    <subcellularLocation>
        <location evidence="2">Secreted</location>
    </subcellularLocation>
</comment>
<comment type="tissue specificity">
    <text evidence="2">Expressed by the skin dorsal glands.</text>
</comment>
<comment type="developmental stage">
    <text evidence="2">Expressed during summer and winter.</text>
</comment>
<comment type="mass spectrometry" mass="1351.0" method="Electrospray" evidence="2"/>
<comment type="similarity">
    <text evidence="1">Belongs to the gastrin/cholecystokinin family.</text>
</comment>